<comment type="function">
    <text evidence="1 3">Catalyzes the phosphorylation of D-fructose 6-phosphate to fructose 1,6-bisphosphate by ATP, the first committing step of glycolysis.</text>
</comment>
<comment type="catalytic activity">
    <reaction evidence="1 3">
        <text>beta-D-fructose 6-phosphate + ATP = beta-D-fructose 1,6-bisphosphate + ADP + H(+)</text>
        <dbReference type="Rhea" id="RHEA:16109"/>
        <dbReference type="ChEBI" id="CHEBI:15378"/>
        <dbReference type="ChEBI" id="CHEBI:30616"/>
        <dbReference type="ChEBI" id="CHEBI:32966"/>
        <dbReference type="ChEBI" id="CHEBI:57634"/>
        <dbReference type="ChEBI" id="CHEBI:456216"/>
        <dbReference type="EC" id="2.7.1.11"/>
    </reaction>
</comment>
<comment type="cofactor">
    <cofactor evidence="1 3">
        <name>Mg(2+)</name>
        <dbReference type="ChEBI" id="CHEBI:18420"/>
    </cofactor>
</comment>
<comment type="activity regulation">
    <text evidence="3">Allosterically inhibited by phosphoenolpyruvate.</text>
</comment>
<comment type="biophysicochemical properties">
    <kinetics>
        <KM evidence="3">0.4 mM for ATP</KM>
        <Vmax evidence="3">165.0 umol/min/mg enzyme</Vmax>
    </kinetics>
    <phDependence>
        <text evidence="3">Optimum pH is 7.5-8.</text>
    </phDependence>
    <temperatureDependence>
        <text evidence="3">Optimum temperature is 30-50 degrees Celsius.</text>
    </temperatureDependence>
</comment>
<comment type="pathway">
    <text evidence="1">Carbohydrate degradation; glycolysis; D-glyceraldehyde 3-phosphate and glycerone phosphate from D-glucose: step 3/4.</text>
</comment>
<comment type="subunit">
    <text evidence="1">Homodimer or homotetramer.</text>
</comment>
<comment type="subcellular location">
    <subcellularLocation>
        <location evidence="1">Cytoplasm</location>
    </subcellularLocation>
</comment>
<comment type="disruption phenotype">
    <text evidence="2">Accumulates glucose 6-phosphate and fructose 6-phosphate. Has an increased carbon flux through the pentose phosphate pathway, resulting in a higher production of the pigmented antibiotics actinorhodin and undecylprodigiosin.</text>
</comment>
<comment type="similarity">
    <text evidence="1">Belongs to the phosphofructokinase type A (PFKA) family. Mixed-substrate PFK group III subfamily.</text>
</comment>
<comment type="caution">
    <text evidence="4">The nucleotide sequence reported in PubMed:9055413 was not that of the characterized enzyme. Inspection of the original N-terminal sequence showed that the characterized enzyme was pfkA2 (SCO5426) and not pfkA1 (SCO2119), another isozyme in S.coelicolor (PubMed:18606812).</text>
</comment>
<sequence length="341" mass="36434">MRIGVLTAGGDCPGLNAVIRSVVHRAVDNYGDEVIGFEDGYAGLLDGRYRALDLNAVSGILARGGTILGSSRLERDRLREACENAGDMIQNFGIDALIPIGGEGTLTAARMLSDAGLPVVGVPKTIDNDISSTDRTFGFDTAVGVATEAMDRLKTTAESHQRVMVVEVMGRHAGWIALESGMAAGAHGICLPERPFDPADLVKMVEERFSRGKKFAVVCVAEGAHPAEGSMDYGKGAIDKFGHERFQGIGTALAFELERRLGKEAKPVILGHVQRGGVPTAYDRVLATRFGWHAVEAAHRGDFGRMTALRGTDVVMVPLAEAVTELKTVPKDRMDEAESVF</sequence>
<accession>Q9L1L8</accession>
<organism>
    <name type="scientific">Streptomyces coelicolor (strain ATCC BAA-471 / A3(2) / M145)</name>
    <dbReference type="NCBI Taxonomy" id="100226"/>
    <lineage>
        <taxon>Bacteria</taxon>
        <taxon>Bacillati</taxon>
        <taxon>Actinomycetota</taxon>
        <taxon>Actinomycetes</taxon>
        <taxon>Kitasatosporales</taxon>
        <taxon>Streptomycetaceae</taxon>
        <taxon>Streptomyces</taxon>
        <taxon>Streptomyces albidoflavus group</taxon>
    </lineage>
</organism>
<keyword id="KW-0067">ATP-binding</keyword>
<keyword id="KW-0963">Cytoplasm</keyword>
<keyword id="KW-0903">Direct protein sequencing</keyword>
<keyword id="KW-0324">Glycolysis</keyword>
<keyword id="KW-0418">Kinase</keyword>
<keyword id="KW-0460">Magnesium</keyword>
<keyword id="KW-0479">Metal-binding</keyword>
<keyword id="KW-0547">Nucleotide-binding</keyword>
<keyword id="KW-1185">Reference proteome</keyword>
<keyword id="KW-0808">Transferase</keyword>
<protein>
    <recommendedName>
        <fullName evidence="1">ATP-dependent 6-phosphofructokinase 2</fullName>
        <shortName evidence="1">ATP-PFK 2</shortName>
        <shortName evidence="1">Phosphofructokinase 2</shortName>
        <ecNumber evidence="1">2.7.1.11</ecNumber>
    </recommendedName>
    <alternativeName>
        <fullName evidence="1">Phosphohexokinase 2</fullName>
    </alternativeName>
</protein>
<name>PFKA2_STRCO</name>
<gene>
    <name evidence="1" type="primary">pfkA2</name>
    <name type="synonym">pfk2</name>
    <name type="ordered locus">SCO5426</name>
    <name type="ORF">SC6A11.02</name>
</gene>
<proteinExistence type="evidence at protein level"/>
<reference key="1">
    <citation type="journal article" date="2002" name="Nature">
        <title>Complete genome sequence of the model actinomycete Streptomyces coelicolor A3(2).</title>
        <authorList>
            <person name="Bentley S.D."/>
            <person name="Chater K.F."/>
            <person name="Cerdeno-Tarraga A.-M."/>
            <person name="Challis G.L."/>
            <person name="Thomson N.R."/>
            <person name="James K.D."/>
            <person name="Harris D.E."/>
            <person name="Quail M.A."/>
            <person name="Kieser H."/>
            <person name="Harper D."/>
            <person name="Bateman A."/>
            <person name="Brown S."/>
            <person name="Chandra G."/>
            <person name="Chen C.W."/>
            <person name="Collins M."/>
            <person name="Cronin A."/>
            <person name="Fraser A."/>
            <person name="Goble A."/>
            <person name="Hidalgo J."/>
            <person name="Hornsby T."/>
            <person name="Howarth S."/>
            <person name="Huang C.-H."/>
            <person name="Kieser T."/>
            <person name="Larke L."/>
            <person name="Murphy L.D."/>
            <person name="Oliver K."/>
            <person name="O'Neil S."/>
            <person name="Rabbinowitsch E."/>
            <person name="Rajandream M.A."/>
            <person name="Rutherford K.M."/>
            <person name="Rutter S."/>
            <person name="Seeger K."/>
            <person name="Saunders D."/>
            <person name="Sharp S."/>
            <person name="Squares R."/>
            <person name="Squares S."/>
            <person name="Taylor K."/>
            <person name="Warren T."/>
            <person name="Wietzorrek A."/>
            <person name="Woodward J.R."/>
            <person name="Barrell B.G."/>
            <person name="Parkhill J."/>
            <person name="Hopwood D.A."/>
        </authorList>
    </citation>
    <scope>NUCLEOTIDE SEQUENCE [LARGE SCALE GENOMIC DNA]</scope>
    <source>
        <strain>ATCC BAA-471 / A3(2) / M145</strain>
    </source>
</reference>
<reference key="2">
    <citation type="journal article" date="1997" name="Appl. Environ. Microbiol.">
        <title>Identification of ATP-dependent phosphofructokinase as a regulatory step in the glycolytic pathway of the actinomycete Streptomyces coelicolor A3(2).</title>
        <authorList>
            <person name="Alves A.M.C.R."/>
            <person name="Euverink G.J.W."/>
            <person name="Bibb M.J."/>
            <person name="Dijkhuizen L."/>
        </authorList>
    </citation>
    <scope>PARTIAL PROTEIN SEQUENCE OF 1-28</scope>
    <scope>FUNCTION</scope>
    <scope>CATALYTIC ACTIVITY</scope>
    <scope>BIOPHYSICOCHEMICAL PROPERTIES</scope>
    <scope>COFACTOR</scope>
    <scope>ACTIVITY REGULATION</scope>
    <source>
        <strain>A3(2) / 1109</strain>
    </source>
</reference>
<reference key="3">
    <citation type="journal article" date="2008" name="J. Biol. Chem.">
        <title>Antibiotic overproduction in Streptomyces coelicolor A3(2) mediated by phosphofructokinase deletion.</title>
        <authorList>
            <person name="Borodina I."/>
            <person name="Siebring J."/>
            <person name="Zhang J."/>
            <person name="Smith C.P."/>
            <person name="van Keulen G."/>
            <person name="Dijkhuizen L."/>
            <person name="Nielsen J."/>
        </authorList>
    </citation>
    <scope>DISRUPTION PHENOTYPE</scope>
</reference>
<feature type="chain" id="PRO_0000111987" description="ATP-dependent 6-phosphofructokinase 2">
    <location>
        <begin position="1"/>
        <end position="341"/>
    </location>
</feature>
<feature type="active site" description="Proton acceptor" evidence="1">
    <location>
        <position position="127"/>
    </location>
</feature>
<feature type="binding site" evidence="1">
    <location>
        <position position="10"/>
    </location>
    <ligand>
        <name>ATP</name>
        <dbReference type="ChEBI" id="CHEBI:30616"/>
    </ligand>
</feature>
<feature type="binding site" evidence="1">
    <location>
        <begin position="72"/>
        <end position="73"/>
    </location>
    <ligand>
        <name>ATP</name>
        <dbReference type="ChEBI" id="CHEBI:30616"/>
    </ligand>
</feature>
<feature type="binding site" evidence="1">
    <location>
        <begin position="102"/>
        <end position="105"/>
    </location>
    <ligand>
        <name>ATP</name>
        <dbReference type="ChEBI" id="CHEBI:30616"/>
    </ligand>
</feature>
<feature type="binding site" evidence="1">
    <location>
        <position position="103"/>
    </location>
    <ligand>
        <name>Mg(2+)</name>
        <dbReference type="ChEBI" id="CHEBI:18420"/>
        <note>catalytic</note>
    </ligand>
</feature>
<feature type="binding site" description="in other chain" evidence="1">
    <location>
        <begin position="125"/>
        <end position="127"/>
    </location>
    <ligand>
        <name>substrate</name>
        <note>ligand shared between dimeric partners</note>
    </ligand>
</feature>
<feature type="binding site" evidence="1">
    <location>
        <position position="162"/>
    </location>
    <ligand>
        <name>substrate</name>
        <note>ligand shared between dimeric partners</note>
    </ligand>
</feature>
<feature type="binding site" description="in other chain" evidence="1">
    <location>
        <begin position="169"/>
        <end position="171"/>
    </location>
    <ligand>
        <name>substrate</name>
        <note>ligand shared between dimeric partners</note>
    </ligand>
</feature>
<feature type="binding site" description="in other chain" evidence="1">
    <location>
        <position position="222"/>
    </location>
    <ligand>
        <name>substrate</name>
        <note>ligand shared between dimeric partners</note>
    </ligand>
</feature>
<feature type="binding site" evidence="1">
    <location>
        <position position="266"/>
    </location>
    <ligand>
        <name>substrate</name>
        <note>ligand shared between dimeric partners</note>
    </ligand>
</feature>
<feature type="binding site" description="in other chain" evidence="1">
    <location>
        <begin position="272"/>
        <end position="275"/>
    </location>
    <ligand>
        <name>substrate</name>
        <note>ligand shared between dimeric partners</note>
    </ligand>
</feature>
<feature type="site" description="Important for substrate specificity; cannot use PPi as phosphoryl donor" evidence="1">
    <location>
        <position position="104"/>
    </location>
</feature>
<dbReference type="EC" id="2.7.1.11" evidence="1"/>
<dbReference type="EMBL" id="AL939123">
    <property type="protein sequence ID" value="CAB72402.1"/>
    <property type="molecule type" value="Genomic_DNA"/>
</dbReference>
<dbReference type="RefSeq" id="NP_629564.1">
    <property type="nucleotide sequence ID" value="NC_003888.3"/>
</dbReference>
<dbReference type="RefSeq" id="WP_003973572.1">
    <property type="nucleotide sequence ID" value="NZ_VNID01000011.1"/>
</dbReference>
<dbReference type="SMR" id="Q9L1L8"/>
<dbReference type="FunCoup" id="Q9L1L8">
    <property type="interactions" value="244"/>
</dbReference>
<dbReference type="STRING" id="100226.gene:17763078"/>
<dbReference type="PaxDb" id="100226-SCO5426"/>
<dbReference type="KEGG" id="sco:SCO5426"/>
<dbReference type="PATRIC" id="fig|100226.15.peg.5507"/>
<dbReference type="eggNOG" id="COG0205">
    <property type="taxonomic scope" value="Bacteria"/>
</dbReference>
<dbReference type="HOGENOM" id="CLU_020655_0_0_11"/>
<dbReference type="InParanoid" id="Q9L1L8"/>
<dbReference type="OrthoDB" id="9802503at2"/>
<dbReference type="PhylomeDB" id="Q9L1L8"/>
<dbReference type="BRENDA" id="2.7.1.11">
    <property type="organism ID" value="5998"/>
</dbReference>
<dbReference type="UniPathway" id="UPA00109">
    <property type="reaction ID" value="UER00182"/>
</dbReference>
<dbReference type="Proteomes" id="UP000001973">
    <property type="component" value="Chromosome"/>
</dbReference>
<dbReference type="GO" id="GO:0005945">
    <property type="term" value="C:6-phosphofructokinase complex"/>
    <property type="evidence" value="ECO:0000318"/>
    <property type="project" value="GO_Central"/>
</dbReference>
<dbReference type="GO" id="GO:0003872">
    <property type="term" value="F:6-phosphofructokinase activity"/>
    <property type="evidence" value="ECO:0000318"/>
    <property type="project" value="GO_Central"/>
</dbReference>
<dbReference type="GO" id="GO:0005524">
    <property type="term" value="F:ATP binding"/>
    <property type="evidence" value="ECO:0007669"/>
    <property type="project" value="UniProtKB-KW"/>
</dbReference>
<dbReference type="GO" id="GO:0047334">
    <property type="term" value="F:diphosphate-fructose-6-phosphate 1-phosphotransferase activity"/>
    <property type="evidence" value="ECO:0007669"/>
    <property type="project" value="InterPro"/>
</dbReference>
<dbReference type="GO" id="GO:0070095">
    <property type="term" value="F:fructose-6-phosphate binding"/>
    <property type="evidence" value="ECO:0000318"/>
    <property type="project" value="GO_Central"/>
</dbReference>
<dbReference type="GO" id="GO:0046872">
    <property type="term" value="F:metal ion binding"/>
    <property type="evidence" value="ECO:0007669"/>
    <property type="project" value="UniProtKB-KW"/>
</dbReference>
<dbReference type="GO" id="GO:0061621">
    <property type="term" value="P:canonical glycolysis"/>
    <property type="evidence" value="ECO:0000318"/>
    <property type="project" value="GO_Central"/>
</dbReference>
<dbReference type="GO" id="GO:0030388">
    <property type="term" value="P:fructose 1,6-bisphosphate metabolic process"/>
    <property type="evidence" value="ECO:0000318"/>
    <property type="project" value="GO_Central"/>
</dbReference>
<dbReference type="GO" id="GO:0006002">
    <property type="term" value="P:fructose 6-phosphate metabolic process"/>
    <property type="evidence" value="ECO:0000318"/>
    <property type="project" value="GO_Central"/>
</dbReference>
<dbReference type="FunFam" id="3.40.50.460:FF:000005">
    <property type="entry name" value="ATP-dependent 6-phosphofructokinase"/>
    <property type="match status" value="1"/>
</dbReference>
<dbReference type="Gene3D" id="3.40.50.450">
    <property type="match status" value="1"/>
</dbReference>
<dbReference type="Gene3D" id="3.40.50.460">
    <property type="entry name" value="Phosphofructokinase domain"/>
    <property type="match status" value="1"/>
</dbReference>
<dbReference type="HAMAP" id="MF_01976">
    <property type="entry name" value="Phosphofructokinase_III"/>
    <property type="match status" value="1"/>
</dbReference>
<dbReference type="InterPro" id="IPR022953">
    <property type="entry name" value="ATP_PFK"/>
</dbReference>
<dbReference type="InterPro" id="IPR012003">
    <property type="entry name" value="ATP_PFK_prok-type"/>
</dbReference>
<dbReference type="InterPro" id="IPR015912">
    <property type="entry name" value="Phosphofructokinase_CS"/>
</dbReference>
<dbReference type="InterPro" id="IPR000023">
    <property type="entry name" value="Phosphofructokinase_dom"/>
</dbReference>
<dbReference type="InterPro" id="IPR012829">
    <property type="entry name" value="Phosphofructokinase_III"/>
</dbReference>
<dbReference type="InterPro" id="IPR035966">
    <property type="entry name" value="PKF_sf"/>
</dbReference>
<dbReference type="NCBIfam" id="TIGR02483">
    <property type="entry name" value="PFK_mixed"/>
    <property type="match status" value="1"/>
</dbReference>
<dbReference type="NCBIfam" id="NF002872">
    <property type="entry name" value="PRK03202.1"/>
    <property type="match status" value="1"/>
</dbReference>
<dbReference type="PANTHER" id="PTHR13697:SF52">
    <property type="entry name" value="ATP-DEPENDENT 6-PHOSPHOFRUCTOKINASE 3"/>
    <property type="match status" value="1"/>
</dbReference>
<dbReference type="PANTHER" id="PTHR13697">
    <property type="entry name" value="PHOSPHOFRUCTOKINASE"/>
    <property type="match status" value="1"/>
</dbReference>
<dbReference type="Pfam" id="PF00365">
    <property type="entry name" value="PFK"/>
    <property type="match status" value="1"/>
</dbReference>
<dbReference type="PIRSF" id="PIRSF000532">
    <property type="entry name" value="ATP_PFK_prok"/>
    <property type="match status" value="1"/>
</dbReference>
<dbReference type="PRINTS" id="PR00476">
    <property type="entry name" value="PHFRCTKINASE"/>
</dbReference>
<dbReference type="SUPFAM" id="SSF53784">
    <property type="entry name" value="Phosphofructokinase"/>
    <property type="match status" value="1"/>
</dbReference>
<dbReference type="PROSITE" id="PS00433">
    <property type="entry name" value="PHOSPHOFRUCTOKINASE"/>
    <property type="match status" value="1"/>
</dbReference>
<evidence type="ECO:0000255" key="1">
    <source>
        <dbReference type="HAMAP-Rule" id="MF_01976"/>
    </source>
</evidence>
<evidence type="ECO:0000269" key="2">
    <source>
    </source>
</evidence>
<evidence type="ECO:0000269" key="3">
    <source>
    </source>
</evidence>
<evidence type="ECO:0000305" key="4">
    <source>
    </source>
</evidence>